<proteinExistence type="inferred from homology"/>
<protein>
    <recommendedName>
        <fullName>Protein MGF 360-14L</fullName>
    </recommendedName>
</protein>
<gene>
    <name type="ordered locus">Pret-037</name>
</gene>
<evidence type="ECO:0000250" key="1"/>
<evidence type="ECO:0000250" key="2">
    <source>
        <dbReference type="UniProtKB" id="P0C9Q5"/>
    </source>
</evidence>
<evidence type="ECO:0000305" key="3"/>
<sequence length="357" mass="41379">MLSLQTLAKKVVACNYLSSDYDYTLQRFGLWWDLGPIHLCNNCKQIFSYKHLQCFSEDDLCLEAALVKAVKSDNLELIRLFVDWGANPEYGLIRVPAVHLKRLCTELGGLTPVTEPRLLEILKEVAKLKSCAGVLLGYDMFCHNPLLETVTRTTLDTVTYTCSNIPLTGDTAHLLLTKFWFALALRHNFTKAIHYFYKRHKNHLYWRVACSLYFNNIFDIHELCREKEICISPNLMMKFACLQKKNYAAIYYCYRLGASLDYGMNLSIYNNNTLNMFFCIDLGATDFDRAQHIAHKAYMYNLSNIFLVKQLFSRDVTLALDVTEPQEIYDRLKSYTSKNLKRAEEYLTAHPEIIVID</sequence>
<comment type="function">
    <text evidence="1 2">Plays a role in virus cell tropism, and may be required for efficient virus replication in macrophages. Also inhibits the host cGAS/STING-mediated type I interferon production by inducing host IRF3 degradation through the proteasome pathway.</text>
</comment>
<comment type="subunit">
    <text evidence="2">Interacts with host IRF3 and TRIM21; these interactions mediates degradation of IRF3 through TRIM21 and ubiquitin-meditated proteolysis.</text>
</comment>
<comment type="subcellular location">
    <subcellularLocation>
        <location evidence="2">Host cytoplasm</location>
    </subcellularLocation>
</comment>
<comment type="similarity">
    <text evidence="3">Belongs to the asfivirus MGF 360 family.</text>
</comment>
<keyword id="KW-1035">Host cytoplasm</keyword>
<keyword id="KW-0945">Host-virus interaction</keyword>
<keyword id="KW-1090">Inhibition of host innate immune response by virus</keyword>
<keyword id="KW-1092">Inhibition of host IRF3 by virus</keyword>
<keyword id="KW-1113">Inhibition of host RLR pathway by virus</keyword>
<keyword id="KW-0899">Viral immunoevasion</keyword>
<organism>
    <name type="scientific">African swine fever virus (isolate Tick/South Africa/Pretoriuskop Pr4/1996)</name>
    <name type="common">ASFV</name>
    <dbReference type="NCBI Taxonomy" id="561443"/>
    <lineage>
        <taxon>Viruses</taxon>
        <taxon>Varidnaviria</taxon>
        <taxon>Bamfordvirae</taxon>
        <taxon>Nucleocytoviricota</taxon>
        <taxon>Pokkesviricetes</taxon>
        <taxon>Asfuvirales</taxon>
        <taxon>Asfarviridae</taxon>
        <taxon>Asfivirus</taxon>
        <taxon>African swine fever virus</taxon>
    </lineage>
</organism>
<reference key="1">
    <citation type="submission" date="2003-03" db="EMBL/GenBank/DDBJ databases">
        <title>African swine fever virus genomes.</title>
        <authorList>
            <person name="Kutish G.F."/>
            <person name="Rock D.L."/>
        </authorList>
    </citation>
    <scope>NUCLEOTIDE SEQUENCE [LARGE SCALE GENOMIC DNA]</scope>
</reference>
<accession>P0C9Q7</accession>
<feature type="chain" id="PRO_0000373290" description="Protein MGF 360-14L">
    <location>
        <begin position="1"/>
        <end position="357"/>
    </location>
</feature>
<organismHost>
    <name type="scientific">Ornithodoros</name>
    <name type="common">relapsing fever ticks</name>
    <dbReference type="NCBI Taxonomy" id="6937"/>
</organismHost>
<organismHost>
    <name type="scientific">Phacochoerus aethiopicus</name>
    <name type="common">Warthog</name>
    <dbReference type="NCBI Taxonomy" id="85517"/>
</organismHost>
<organismHost>
    <name type="scientific">Phacochoerus africanus</name>
    <name type="common">Warthog</name>
    <dbReference type="NCBI Taxonomy" id="41426"/>
</organismHost>
<organismHost>
    <name type="scientific">Potamochoerus larvatus</name>
    <name type="common">Bushpig</name>
    <dbReference type="NCBI Taxonomy" id="273792"/>
</organismHost>
<organismHost>
    <name type="scientific">Sus scrofa</name>
    <name type="common">Pig</name>
    <dbReference type="NCBI Taxonomy" id="9823"/>
</organismHost>
<name>36014_ASFP4</name>
<dbReference type="EMBL" id="AY261363">
    <property type="status" value="NOT_ANNOTATED_CDS"/>
    <property type="molecule type" value="Genomic_DNA"/>
</dbReference>
<dbReference type="Proteomes" id="UP000000859">
    <property type="component" value="Segment"/>
</dbReference>
<dbReference type="GO" id="GO:0030430">
    <property type="term" value="C:host cell cytoplasm"/>
    <property type="evidence" value="ECO:0007669"/>
    <property type="project" value="UniProtKB-SubCell"/>
</dbReference>
<dbReference type="GO" id="GO:0039548">
    <property type="term" value="P:symbiont-mediated suppression of host cytoplasmic pattern recognition receptor signaling pathway via inhibition of IRF3 activity"/>
    <property type="evidence" value="ECO:0007669"/>
    <property type="project" value="UniProtKB-KW"/>
</dbReference>
<dbReference type="GO" id="GO:0042330">
    <property type="term" value="P:taxis"/>
    <property type="evidence" value="ECO:0007669"/>
    <property type="project" value="InterPro"/>
</dbReference>
<dbReference type="InterPro" id="IPR002595">
    <property type="entry name" value="ASFV_MGF360"/>
</dbReference>
<dbReference type="Pfam" id="PF01671">
    <property type="entry name" value="ASFV_360"/>
    <property type="match status" value="1"/>
</dbReference>